<name>URE2_CHESB</name>
<accession>Q11EW5</accession>
<dbReference type="EC" id="3.5.1.5" evidence="1"/>
<dbReference type="EMBL" id="CP000390">
    <property type="protein sequence ID" value="ABG64060.1"/>
    <property type="molecule type" value="Genomic_DNA"/>
</dbReference>
<dbReference type="SMR" id="Q11EW5"/>
<dbReference type="STRING" id="266779.Meso_2683"/>
<dbReference type="KEGG" id="mes:Meso_2683"/>
<dbReference type="eggNOG" id="COG0832">
    <property type="taxonomic scope" value="Bacteria"/>
</dbReference>
<dbReference type="HOGENOM" id="CLU_129707_1_1_5"/>
<dbReference type="OrthoDB" id="9797217at2"/>
<dbReference type="UniPathway" id="UPA00258">
    <property type="reaction ID" value="UER00370"/>
</dbReference>
<dbReference type="GO" id="GO:0035550">
    <property type="term" value="C:urease complex"/>
    <property type="evidence" value="ECO:0007669"/>
    <property type="project" value="InterPro"/>
</dbReference>
<dbReference type="GO" id="GO:0009039">
    <property type="term" value="F:urease activity"/>
    <property type="evidence" value="ECO:0007669"/>
    <property type="project" value="UniProtKB-UniRule"/>
</dbReference>
<dbReference type="GO" id="GO:0043419">
    <property type="term" value="P:urea catabolic process"/>
    <property type="evidence" value="ECO:0007669"/>
    <property type="project" value="UniProtKB-UniRule"/>
</dbReference>
<dbReference type="CDD" id="cd00407">
    <property type="entry name" value="Urease_beta"/>
    <property type="match status" value="1"/>
</dbReference>
<dbReference type="FunFam" id="2.10.150.10:FF:000001">
    <property type="entry name" value="Urease subunit beta"/>
    <property type="match status" value="1"/>
</dbReference>
<dbReference type="Gene3D" id="2.10.150.10">
    <property type="entry name" value="Urease, beta subunit"/>
    <property type="match status" value="1"/>
</dbReference>
<dbReference type="HAMAP" id="MF_01954">
    <property type="entry name" value="Urease_beta"/>
    <property type="match status" value="1"/>
</dbReference>
<dbReference type="InterPro" id="IPR002019">
    <property type="entry name" value="Urease_beta-like"/>
</dbReference>
<dbReference type="InterPro" id="IPR036461">
    <property type="entry name" value="Urease_betasu_sf"/>
</dbReference>
<dbReference type="InterPro" id="IPR050069">
    <property type="entry name" value="Urease_subunit"/>
</dbReference>
<dbReference type="NCBIfam" id="NF009682">
    <property type="entry name" value="PRK13203.1"/>
    <property type="match status" value="1"/>
</dbReference>
<dbReference type="NCBIfam" id="TIGR00192">
    <property type="entry name" value="urease_beta"/>
    <property type="match status" value="1"/>
</dbReference>
<dbReference type="PANTHER" id="PTHR33569">
    <property type="entry name" value="UREASE"/>
    <property type="match status" value="1"/>
</dbReference>
<dbReference type="PANTHER" id="PTHR33569:SF1">
    <property type="entry name" value="UREASE"/>
    <property type="match status" value="1"/>
</dbReference>
<dbReference type="Pfam" id="PF00699">
    <property type="entry name" value="Urease_beta"/>
    <property type="match status" value="1"/>
</dbReference>
<dbReference type="SUPFAM" id="SSF51278">
    <property type="entry name" value="Urease, beta-subunit"/>
    <property type="match status" value="1"/>
</dbReference>
<sequence length="101" mass="10980">MIPGEVIPKAGEIELNAGAPQVVLEVSNTGDRPIQVGSHYHFYETNGALSFDREKARGMRLDIAAGTAVRFEPGQAREVRLVPLSGARKVFGFQQKIMGDL</sequence>
<comment type="catalytic activity">
    <reaction evidence="1">
        <text>urea + 2 H2O + H(+) = hydrogencarbonate + 2 NH4(+)</text>
        <dbReference type="Rhea" id="RHEA:20557"/>
        <dbReference type="ChEBI" id="CHEBI:15377"/>
        <dbReference type="ChEBI" id="CHEBI:15378"/>
        <dbReference type="ChEBI" id="CHEBI:16199"/>
        <dbReference type="ChEBI" id="CHEBI:17544"/>
        <dbReference type="ChEBI" id="CHEBI:28938"/>
        <dbReference type="EC" id="3.5.1.5"/>
    </reaction>
</comment>
<comment type="pathway">
    <text evidence="1">Nitrogen metabolism; urea degradation; CO(2) and NH(3) from urea (urease route): step 1/1.</text>
</comment>
<comment type="subunit">
    <text evidence="1">Heterotrimer of UreA (gamma), UreB (beta) and UreC (alpha) subunits. Three heterotrimers associate to form the active enzyme.</text>
</comment>
<comment type="subcellular location">
    <subcellularLocation>
        <location evidence="1">Cytoplasm</location>
    </subcellularLocation>
</comment>
<comment type="similarity">
    <text evidence="1">Belongs to the urease beta subunit family.</text>
</comment>
<evidence type="ECO:0000255" key="1">
    <source>
        <dbReference type="HAMAP-Rule" id="MF_01954"/>
    </source>
</evidence>
<keyword id="KW-0963">Cytoplasm</keyword>
<keyword id="KW-0378">Hydrolase</keyword>
<reference key="1">
    <citation type="submission" date="2006-06" db="EMBL/GenBank/DDBJ databases">
        <title>Complete sequence of chromosome of Mesorhizobium sp. BNC1.</title>
        <authorList>
            <consortium name="US DOE Joint Genome Institute"/>
            <person name="Copeland A."/>
            <person name="Lucas S."/>
            <person name="Lapidus A."/>
            <person name="Barry K."/>
            <person name="Detter J.C."/>
            <person name="Glavina del Rio T."/>
            <person name="Hammon N."/>
            <person name="Israni S."/>
            <person name="Dalin E."/>
            <person name="Tice H."/>
            <person name="Pitluck S."/>
            <person name="Chertkov O."/>
            <person name="Brettin T."/>
            <person name="Bruce D."/>
            <person name="Han C."/>
            <person name="Tapia R."/>
            <person name="Gilna P."/>
            <person name="Schmutz J."/>
            <person name="Larimer F."/>
            <person name="Land M."/>
            <person name="Hauser L."/>
            <person name="Kyrpides N."/>
            <person name="Mikhailova N."/>
            <person name="Richardson P."/>
        </authorList>
    </citation>
    <scope>NUCLEOTIDE SEQUENCE [LARGE SCALE GENOMIC DNA]</scope>
    <source>
        <strain>BNC1</strain>
    </source>
</reference>
<protein>
    <recommendedName>
        <fullName evidence="1">Urease subunit beta</fullName>
        <ecNumber evidence="1">3.5.1.5</ecNumber>
    </recommendedName>
    <alternativeName>
        <fullName evidence="1">Urea amidohydrolase subunit beta</fullName>
    </alternativeName>
</protein>
<feature type="chain" id="PRO_1000070741" description="Urease subunit beta">
    <location>
        <begin position="1"/>
        <end position="101"/>
    </location>
</feature>
<proteinExistence type="inferred from homology"/>
<organism>
    <name type="scientific">Chelativorans sp. (strain BNC1)</name>
    <dbReference type="NCBI Taxonomy" id="266779"/>
    <lineage>
        <taxon>Bacteria</taxon>
        <taxon>Pseudomonadati</taxon>
        <taxon>Pseudomonadota</taxon>
        <taxon>Alphaproteobacteria</taxon>
        <taxon>Hyphomicrobiales</taxon>
        <taxon>Phyllobacteriaceae</taxon>
        <taxon>Chelativorans</taxon>
    </lineage>
</organism>
<gene>
    <name evidence="1" type="primary">ureB</name>
    <name type="ordered locus">Meso_2683</name>
</gene>